<gene>
    <name evidence="1" type="primary">gatB</name>
    <name type="ordered locus">MLBr01700</name>
</gene>
<keyword id="KW-0067">ATP-binding</keyword>
<keyword id="KW-0436">Ligase</keyword>
<keyword id="KW-0547">Nucleotide-binding</keyword>
<keyword id="KW-0648">Protein biosynthesis</keyword>
<reference key="1">
    <citation type="journal article" date="2009" name="Nat. Genet.">
        <title>Comparative genomic and phylogeographic analysis of Mycobacterium leprae.</title>
        <authorList>
            <person name="Monot M."/>
            <person name="Honore N."/>
            <person name="Garnier T."/>
            <person name="Zidane N."/>
            <person name="Sherafi D."/>
            <person name="Paniz-Mondolfi A."/>
            <person name="Matsuoka M."/>
            <person name="Taylor G.M."/>
            <person name="Donoghue H.D."/>
            <person name="Bouwman A."/>
            <person name="Mays S."/>
            <person name="Watson C."/>
            <person name="Lockwood D."/>
            <person name="Khamispour A."/>
            <person name="Dowlati Y."/>
            <person name="Jianping S."/>
            <person name="Rea T.H."/>
            <person name="Vera-Cabrera L."/>
            <person name="Stefani M.M."/>
            <person name="Banu S."/>
            <person name="Macdonald M."/>
            <person name="Sapkota B.R."/>
            <person name="Spencer J.S."/>
            <person name="Thomas J."/>
            <person name="Harshman K."/>
            <person name="Singh P."/>
            <person name="Busso P."/>
            <person name="Gattiker A."/>
            <person name="Rougemont J."/>
            <person name="Brennan P.J."/>
            <person name="Cole S.T."/>
        </authorList>
    </citation>
    <scope>NUCLEOTIDE SEQUENCE [LARGE SCALE GENOMIC DNA]</scope>
    <source>
        <strain>Br4923</strain>
    </source>
</reference>
<protein>
    <recommendedName>
        <fullName evidence="1">Aspartyl/glutamyl-tRNA(Asn/Gln) amidotransferase subunit B</fullName>
        <shortName evidence="1">Asp/Glu-ADT subunit B</shortName>
        <ecNumber evidence="1">6.3.5.-</ecNumber>
    </recommendedName>
</protein>
<dbReference type="EC" id="6.3.5.-" evidence="1"/>
<dbReference type="EMBL" id="FM211192">
    <property type="protein sequence ID" value="CAR71795.1"/>
    <property type="molecule type" value="Genomic_DNA"/>
</dbReference>
<dbReference type="SMR" id="B8ZS22"/>
<dbReference type="KEGG" id="mlb:MLBr01700"/>
<dbReference type="HOGENOM" id="CLU_019240_0_0_11"/>
<dbReference type="Proteomes" id="UP000006900">
    <property type="component" value="Chromosome"/>
</dbReference>
<dbReference type="GO" id="GO:0050566">
    <property type="term" value="F:asparaginyl-tRNA synthase (glutamine-hydrolyzing) activity"/>
    <property type="evidence" value="ECO:0007669"/>
    <property type="project" value="RHEA"/>
</dbReference>
<dbReference type="GO" id="GO:0005524">
    <property type="term" value="F:ATP binding"/>
    <property type="evidence" value="ECO:0007669"/>
    <property type="project" value="UniProtKB-KW"/>
</dbReference>
<dbReference type="GO" id="GO:0050567">
    <property type="term" value="F:glutaminyl-tRNA synthase (glutamine-hydrolyzing) activity"/>
    <property type="evidence" value="ECO:0007669"/>
    <property type="project" value="UniProtKB-UniRule"/>
</dbReference>
<dbReference type="GO" id="GO:0070681">
    <property type="term" value="P:glutaminyl-tRNAGln biosynthesis via transamidation"/>
    <property type="evidence" value="ECO:0007669"/>
    <property type="project" value="TreeGrafter"/>
</dbReference>
<dbReference type="GO" id="GO:0006412">
    <property type="term" value="P:translation"/>
    <property type="evidence" value="ECO:0007669"/>
    <property type="project" value="UniProtKB-UniRule"/>
</dbReference>
<dbReference type="FunFam" id="1.10.10.410:FF:000002">
    <property type="entry name" value="Aspartyl/glutamyl-tRNA(Asn/Gln) amidotransferase subunit B"/>
    <property type="match status" value="1"/>
</dbReference>
<dbReference type="Gene3D" id="1.10.10.410">
    <property type="match status" value="1"/>
</dbReference>
<dbReference type="HAMAP" id="MF_00121">
    <property type="entry name" value="GatB"/>
    <property type="match status" value="1"/>
</dbReference>
<dbReference type="InterPro" id="IPR017959">
    <property type="entry name" value="Asn/Gln-tRNA_amidoTrfase_suB/E"/>
</dbReference>
<dbReference type="InterPro" id="IPR006075">
    <property type="entry name" value="Asn/Gln-tRNA_Trfase_suB/E_cat"/>
</dbReference>
<dbReference type="InterPro" id="IPR018027">
    <property type="entry name" value="Asn/Gln_amidotransferase"/>
</dbReference>
<dbReference type="InterPro" id="IPR003789">
    <property type="entry name" value="Asn/Gln_tRNA_amidoTrase-B-like"/>
</dbReference>
<dbReference type="InterPro" id="IPR004413">
    <property type="entry name" value="GatB"/>
</dbReference>
<dbReference type="InterPro" id="IPR023168">
    <property type="entry name" value="GatB_Yqey_C_2"/>
</dbReference>
<dbReference type="InterPro" id="IPR017958">
    <property type="entry name" value="Gln-tRNA_amidoTrfase_suB_CS"/>
</dbReference>
<dbReference type="InterPro" id="IPR014746">
    <property type="entry name" value="Gln_synth/guanido_kin_cat_dom"/>
</dbReference>
<dbReference type="NCBIfam" id="TIGR00133">
    <property type="entry name" value="gatB"/>
    <property type="match status" value="1"/>
</dbReference>
<dbReference type="NCBIfam" id="NF004012">
    <property type="entry name" value="PRK05477.1-2"/>
    <property type="match status" value="1"/>
</dbReference>
<dbReference type="NCBIfam" id="NF004013">
    <property type="entry name" value="PRK05477.1-3"/>
    <property type="match status" value="1"/>
</dbReference>
<dbReference type="NCBIfam" id="NF004014">
    <property type="entry name" value="PRK05477.1-4"/>
    <property type="match status" value="1"/>
</dbReference>
<dbReference type="PANTHER" id="PTHR11659">
    <property type="entry name" value="GLUTAMYL-TRNA GLN AMIDOTRANSFERASE SUBUNIT B MITOCHONDRIAL AND PROKARYOTIC PET112-RELATED"/>
    <property type="match status" value="1"/>
</dbReference>
<dbReference type="PANTHER" id="PTHR11659:SF0">
    <property type="entry name" value="GLUTAMYL-TRNA(GLN) AMIDOTRANSFERASE SUBUNIT B, MITOCHONDRIAL"/>
    <property type="match status" value="1"/>
</dbReference>
<dbReference type="Pfam" id="PF02934">
    <property type="entry name" value="GatB_N"/>
    <property type="match status" value="1"/>
</dbReference>
<dbReference type="Pfam" id="PF02637">
    <property type="entry name" value="GatB_Yqey"/>
    <property type="match status" value="1"/>
</dbReference>
<dbReference type="SMART" id="SM00845">
    <property type="entry name" value="GatB_Yqey"/>
    <property type="match status" value="1"/>
</dbReference>
<dbReference type="SUPFAM" id="SSF89095">
    <property type="entry name" value="GatB/YqeY motif"/>
    <property type="match status" value="1"/>
</dbReference>
<dbReference type="SUPFAM" id="SSF55931">
    <property type="entry name" value="Glutamine synthetase/guanido kinase"/>
    <property type="match status" value="1"/>
</dbReference>
<dbReference type="PROSITE" id="PS01234">
    <property type="entry name" value="GATB"/>
    <property type="match status" value="1"/>
</dbReference>
<name>GATB_MYCLB</name>
<sequence length="509" mass="55361">MTVVSGASKASGADLLDYDVVVARFDPVFGLEVHVELSTVTKMFCGCATTFGAEPNTQVCPVCLGLPGSLPVLNRAAVQSAIRIGLALNCEIVPWCRFARKNYFYPDVPKNYQISQYDEPIAINGYLEVPLEDDTTWRVEIERAHMEEDTGKLTHLGSETGRIYGATTSLIDYNRAGVPLIEIVTKPIEGAGVRAPQIARAYVKALQDLLRTLDVSDVRMDQGSMRCDANVSLKPIGTVEFGTRSEIKNVNSLKSVEMAVRYEMQRQGAILVSGGRIAQETRHFHEDGYTSPGRAKETAQDYRYFPDPDLEPVAPSRELVEQLRQTIPELPWLSRKRIQQEWGISDEVMRDLVNAGAVELVAATVKNGASSEQARAWWGNFLVQKANEANITLDELAITPAQVAVVVALVDEGKLSIRLARQVVEGVLAGEGEPEQVMVDRDLALVRDDSVMQAAVDEALAADPDVAEKIRGGKVAAAGAIVGAVMKTTRGQADAARVRELVLAICGQG</sequence>
<feature type="chain" id="PRO_1000122529" description="Aspartyl/glutamyl-tRNA(Asn/Gln) amidotransferase subunit B">
    <location>
        <begin position="1"/>
        <end position="509"/>
    </location>
</feature>
<evidence type="ECO:0000255" key="1">
    <source>
        <dbReference type="HAMAP-Rule" id="MF_00121"/>
    </source>
</evidence>
<comment type="function">
    <text evidence="1">Allows the formation of correctly charged Asn-tRNA(Asn) or Gln-tRNA(Gln) through the transamidation of misacylated Asp-tRNA(Asn) or Glu-tRNA(Gln) in organisms which lack either or both of asparaginyl-tRNA or glutaminyl-tRNA synthetases. The reaction takes place in the presence of glutamine and ATP through an activated phospho-Asp-tRNA(Asn) or phospho-Glu-tRNA(Gln).</text>
</comment>
<comment type="catalytic activity">
    <reaction evidence="1">
        <text>L-glutamyl-tRNA(Gln) + L-glutamine + ATP + H2O = L-glutaminyl-tRNA(Gln) + L-glutamate + ADP + phosphate + H(+)</text>
        <dbReference type="Rhea" id="RHEA:17521"/>
        <dbReference type="Rhea" id="RHEA-COMP:9681"/>
        <dbReference type="Rhea" id="RHEA-COMP:9684"/>
        <dbReference type="ChEBI" id="CHEBI:15377"/>
        <dbReference type="ChEBI" id="CHEBI:15378"/>
        <dbReference type="ChEBI" id="CHEBI:29985"/>
        <dbReference type="ChEBI" id="CHEBI:30616"/>
        <dbReference type="ChEBI" id="CHEBI:43474"/>
        <dbReference type="ChEBI" id="CHEBI:58359"/>
        <dbReference type="ChEBI" id="CHEBI:78520"/>
        <dbReference type="ChEBI" id="CHEBI:78521"/>
        <dbReference type="ChEBI" id="CHEBI:456216"/>
    </reaction>
</comment>
<comment type="catalytic activity">
    <reaction evidence="1">
        <text>L-aspartyl-tRNA(Asn) + L-glutamine + ATP + H2O = L-asparaginyl-tRNA(Asn) + L-glutamate + ADP + phosphate + 2 H(+)</text>
        <dbReference type="Rhea" id="RHEA:14513"/>
        <dbReference type="Rhea" id="RHEA-COMP:9674"/>
        <dbReference type="Rhea" id="RHEA-COMP:9677"/>
        <dbReference type="ChEBI" id="CHEBI:15377"/>
        <dbReference type="ChEBI" id="CHEBI:15378"/>
        <dbReference type="ChEBI" id="CHEBI:29985"/>
        <dbReference type="ChEBI" id="CHEBI:30616"/>
        <dbReference type="ChEBI" id="CHEBI:43474"/>
        <dbReference type="ChEBI" id="CHEBI:58359"/>
        <dbReference type="ChEBI" id="CHEBI:78515"/>
        <dbReference type="ChEBI" id="CHEBI:78516"/>
        <dbReference type="ChEBI" id="CHEBI:456216"/>
    </reaction>
</comment>
<comment type="subunit">
    <text evidence="1">Heterotrimer of A, B and C subunits.</text>
</comment>
<comment type="similarity">
    <text evidence="1">Belongs to the GatB/GatE family. GatB subfamily.</text>
</comment>
<organism>
    <name type="scientific">Mycobacterium leprae (strain Br4923)</name>
    <dbReference type="NCBI Taxonomy" id="561304"/>
    <lineage>
        <taxon>Bacteria</taxon>
        <taxon>Bacillati</taxon>
        <taxon>Actinomycetota</taxon>
        <taxon>Actinomycetes</taxon>
        <taxon>Mycobacteriales</taxon>
        <taxon>Mycobacteriaceae</taxon>
        <taxon>Mycobacterium</taxon>
    </lineage>
</organism>
<accession>B8ZS22</accession>
<proteinExistence type="inferred from homology"/>